<evidence type="ECO:0000255" key="1">
    <source>
        <dbReference type="HAMAP-Rule" id="MF_00519"/>
    </source>
</evidence>
<gene>
    <name evidence="1" type="primary">araA</name>
    <name type="ordered locus">Aflv_0531</name>
</gene>
<dbReference type="EC" id="5.3.1.4" evidence="1"/>
<dbReference type="EMBL" id="CP000922">
    <property type="protein sequence ID" value="ACJ32915.1"/>
    <property type="molecule type" value="Genomic_DNA"/>
</dbReference>
<dbReference type="RefSeq" id="WP_012574230.1">
    <property type="nucleotide sequence ID" value="NC_011567.1"/>
</dbReference>
<dbReference type="SMR" id="B7GGW0"/>
<dbReference type="STRING" id="491915.Aflv_0531"/>
<dbReference type="GeneID" id="7036788"/>
<dbReference type="KEGG" id="afl:Aflv_0531"/>
<dbReference type="PATRIC" id="fig|491915.6.peg.544"/>
<dbReference type="eggNOG" id="COG2160">
    <property type="taxonomic scope" value="Bacteria"/>
</dbReference>
<dbReference type="HOGENOM" id="CLU_045663_0_0_9"/>
<dbReference type="UniPathway" id="UPA00145">
    <property type="reaction ID" value="UER00565"/>
</dbReference>
<dbReference type="Proteomes" id="UP000000742">
    <property type="component" value="Chromosome"/>
</dbReference>
<dbReference type="GO" id="GO:0005829">
    <property type="term" value="C:cytosol"/>
    <property type="evidence" value="ECO:0007669"/>
    <property type="project" value="TreeGrafter"/>
</dbReference>
<dbReference type="GO" id="GO:0008733">
    <property type="term" value="F:L-arabinose isomerase activity"/>
    <property type="evidence" value="ECO:0007669"/>
    <property type="project" value="UniProtKB-UniRule"/>
</dbReference>
<dbReference type="GO" id="GO:0030145">
    <property type="term" value="F:manganese ion binding"/>
    <property type="evidence" value="ECO:0007669"/>
    <property type="project" value="UniProtKB-UniRule"/>
</dbReference>
<dbReference type="GO" id="GO:0019569">
    <property type="term" value="P:L-arabinose catabolic process to xylulose 5-phosphate"/>
    <property type="evidence" value="ECO:0007669"/>
    <property type="project" value="UniProtKB-UniRule"/>
</dbReference>
<dbReference type="CDD" id="cd03557">
    <property type="entry name" value="L-arabinose_isomerase"/>
    <property type="match status" value="1"/>
</dbReference>
<dbReference type="Gene3D" id="3.40.50.10940">
    <property type="match status" value="1"/>
</dbReference>
<dbReference type="HAMAP" id="MF_00519">
    <property type="entry name" value="Arabinose_Isome"/>
    <property type="match status" value="1"/>
</dbReference>
<dbReference type="InterPro" id="IPR024664">
    <property type="entry name" value="Ara_Isoase_C"/>
</dbReference>
<dbReference type="InterPro" id="IPR055390">
    <property type="entry name" value="AraA_central"/>
</dbReference>
<dbReference type="InterPro" id="IPR055389">
    <property type="entry name" value="AraA_N"/>
</dbReference>
<dbReference type="InterPro" id="IPR038583">
    <property type="entry name" value="AraA_N_sf"/>
</dbReference>
<dbReference type="InterPro" id="IPR004216">
    <property type="entry name" value="Fuc/Ara_isomerase_C"/>
</dbReference>
<dbReference type="InterPro" id="IPR009015">
    <property type="entry name" value="Fucose_isomerase_N/cen_sf"/>
</dbReference>
<dbReference type="InterPro" id="IPR003762">
    <property type="entry name" value="Lara_isomerase"/>
</dbReference>
<dbReference type="NCBIfam" id="NF002795">
    <property type="entry name" value="PRK02929.1"/>
    <property type="match status" value="1"/>
</dbReference>
<dbReference type="PANTHER" id="PTHR38464">
    <property type="entry name" value="L-ARABINOSE ISOMERASE"/>
    <property type="match status" value="1"/>
</dbReference>
<dbReference type="PANTHER" id="PTHR38464:SF1">
    <property type="entry name" value="L-ARABINOSE ISOMERASE"/>
    <property type="match status" value="1"/>
</dbReference>
<dbReference type="Pfam" id="PF24856">
    <property type="entry name" value="AraA_central"/>
    <property type="match status" value="1"/>
</dbReference>
<dbReference type="Pfam" id="PF02610">
    <property type="entry name" value="AraA_N"/>
    <property type="match status" value="1"/>
</dbReference>
<dbReference type="Pfam" id="PF11762">
    <property type="entry name" value="Arabinose_Iso_C"/>
    <property type="match status" value="1"/>
</dbReference>
<dbReference type="PIRSF" id="PIRSF001478">
    <property type="entry name" value="L-ara_isomerase"/>
    <property type="match status" value="1"/>
</dbReference>
<dbReference type="SUPFAM" id="SSF50443">
    <property type="entry name" value="FucI/AraA C-terminal domain-like"/>
    <property type="match status" value="1"/>
</dbReference>
<dbReference type="SUPFAM" id="SSF53743">
    <property type="entry name" value="FucI/AraA N-terminal and middle domains"/>
    <property type="match status" value="1"/>
</dbReference>
<organism>
    <name type="scientific">Anoxybacillus flavithermus (strain DSM 21510 / WK1)</name>
    <dbReference type="NCBI Taxonomy" id="491915"/>
    <lineage>
        <taxon>Bacteria</taxon>
        <taxon>Bacillati</taxon>
        <taxon>Bacillota</taxon>
        <taxon>Bacilli</taxon>
        <taxon>Bacillales</taxon>
        <taxon>Anoxybacillaceae</taxon>
        <taxon>Anoxybacillus</taxon>
    </lineage>
</organism>
<keyword id="KW-0054">Arabinose catabolism</keyword>
<keyword id="KW-0119">Carbohydrate metabolism</keyword>
<keyword id="KW-0413">Isomerase</keyword>
<keyword id="KW-0464">Manganese</keyword>
<keyword id="KW-0479">Metal-binding</keyword>
<sequence>MLLLRPYEFWFVTGSQHLYGEEVLQQVEGHSRTIVNELNRDSVFPFSFVFKSVVTTPEEIRNVCLEANASEQCAGVITWMHTFSPAKMWIGGLLELRKPLLHLHTQFNRDIPWDSIDMDFMNLNQSAHGDREYGFIGARMGVARKVVVGHWEDPEVRERLAKWMRTAVAFAESRQLKVARFGDNMREVAVTEGDKVGAQIQFGWSVNGYGVGDLVQSIRDVSEQSINELLDEYAELYDMVPAGRQDGPVRESIREQARIELGLKAFLQDGNFTAFTTTFEDLHGMKQLPGLAVQRLMAEGYGFGGEGDWKTAALVRLMKVMADGKGTSFMEDYTYHFEPGNELILGAHMLEVCPTIAATRPRIEVHPLSIGGKEDPARLVFDGGEGAAVNASLIDLGHRFRLIVNEVDAVKPKHNMPKLPVARILWKPRPSLRDSAEAWILAGGAHHTCFSFAVTTEQLQDFAEIIGVECVVINEHTSVASFKNELRWNEVFWGRKQGLL</sequence>
<name>ARAA_ANOFW</name>
<comment type="function">
    <text evidence="1">Catalyzes the conversion of L-arabinose to L-ribulose.</text>
</comment>
<comment type="catalytic activity">
    <reaction evidence="1">
        <text>beta-L-arabinopyranose = L-ribulose</text>
        <dbReference type="Rhea" id="RHEA:14821"/>
        <dbReference type="ChEBI" id="CHEBI:16880"/>
        <dbReference type="ChEBI" id="CHEBI:40886"/>
        <dbReference type="EC" id="5.3.1.4"/>
    </reaction>
</comment>
<comment type="cofactor">
    <cofactor evidence="1">
        <name>Mn(2+)</name>
        <dbReference type="ChEBI" id="CHEBI:29035"/>
    </cofactor>
    <text evidence="1">Binds 1 Mn(2+) ion per subunit.</text>
</comment>
<comment type="pathway">
    <text evidence="1">Carbohydrate degradation; L-arabinose degradation via L-ribulose; D-xylulose 5-phosphate from L-arabinose (bacterial route): step 1/3.</text>
</comment>
<comment type="similarity">
    <text evidence="1">Belongs to the arabinose isomerase family.</text>
</comment>
<accession>B7GGW0</accession>
<feature type="chain" id="PRO_1000127596" description="L-arabinose isomerase">
    <location>
        <begin position="1"/>
        <end position="500"/>
    </location>
</feature>
<feature type="binding site" evidence="1">
    <location>
        <position position="306"/>
    </location>
    <ligand>
        <name>Mn(2+)</name>
        <dbReference type="ChEBI" id="CHEBI:29035"/>
    </ligand>
</feature>
<feature type="binding site" evidence="1">
    <location>
        <position position="331"/>
    </location>
    <ligand>
        <name>Mn(2+)</name>
        <dbReference type="ChEBI" id="CHEBI:29035"/>
    </ligand>
</feature>
<feature type="binding site" evidence="1">
    <location>
        <position position="348"/>
    </location>
    <ligand>
        <name>Mn(2+)</name>
        <dbReference type="ChEBI" id="CHEBI:29035"/>
    </ligand>
</feature>
<feature type="binding site" evidence="1">
    <location>
        <position position="447"/>
    </location>
    <ligand>
        <name>Mn(2+)</name>
        <dbReference type="ChEBI" id="CHEBI:29035"/>
    </ligand>
</feature>
<proteinExistence type="inferred from homology"/>
<reference key="1">
    <citation type="journal article" date="2008" name="Genome Biol.">
        <title>Encapsulated in silica: genome, proteome and physiology of the thermophilic bacterium Anoxybacillus flavithermus WK1.</title>
        <authorList>
            <person name="Saw J.H."/>
            <person name="Mountain B.W."/>
            <person name="Feng L."/>
            <person name="Omelchenko M.V."/>
            <person name="Hou S."/>
            <person name="Saito J.A."/>
            <person name="Stott M.B."/>
            <person name="Li D."/>
            <person name="Zhao G."/>
            <person name="Wu J."/>
            <person name="Galperin M.Y."/>
            <person name="Koonin E.V."/>
            <person name="Makarova K.S."/>
            <person name="Wolf Y.I."/>
            <person name="Rigden D.J."/>
            <person name="Dunfield P.F."/>
            <person name="Wang L."/>
            <person name="Alam M."/>
        </authorList>
    </citation>
    <scope>NUCLEOTIDE SEQUENCE [LARGE SCALE GENOMIC DNA]</scope>
    <source>
        <strain>DSM 21510 / WK1</strain>
    </source>
</reference>
<protein>
    <recommendedName>
        <fullName evidence="1">L-arabinose isomerase</fullName>
        <ecNumber evidence="1">5.3.1.4</ecNumber>
    </recommendedName>
</protein>